<gene>
    <name evidence="1" type="primary">rplI</name>
    <name type="ordered locus">BCc_368</name>
</gene>
<protein>
    <recommendedName>
        <fullName evidence="1">Large ribosomal subunit protein bL9</fullName>
    </recommendedName>
    <alternativeName>
        <fullName evidence="2">50S ribosomal protein L9</fullName>
    </alternativeName>
</protein>
<proteinExistence type="inferred from homology"/>
<reference key="1">
    <citation type="journal article" date="2006" name="Science">
        <title>A small microbial genome: the end of a long symbiotic relationship?</title>
        <authorList>
            <person name="Perez-Brocal V."/>
            <person name="Gil R."/>
            <person name="Ramos S."/>
            <person name="Lamelas A."/>
            <person name="Postigo M."/>
            <person name="Michelena J.M."/>
            <person name="Silva F.J."/>
            <person name="Moya A."/>
            <person name="Latorre A."/>
        </authorList>
    </citation>
    <scope>NUCLEOTIDE SEQUENCE [LARGE SCALE GENOMIC DNA]</scope>
    <source>
        <strain>Cc</strain>
    </source>
</reference>
<feature type="chain" id="PRO_1000014748" description="Large ribosomal subunit protein bL9">
    <location>
        <begin position="1"/>
        <end position="149"/>
    </location>
</feature>
<organism>
    <name type="scientific">Buchnera aphidicola subsp. Cinara cedri (strain Cc)</name>
    <dbReference type="NCBI Taxonomy" id="372461"/>
    <lineage>
        <taxon>Bacteria</taxon>
        <taxon>Pseudomonadati</taxon>
        <taxon>Pseudomonadota</taxon>
        <taxon>Gammaproteobacteria</taxon>
        <taxon>Enterobacterales</taxon>
        <taxon>Erwiniaceae</taxon>
        <taxon>Buchnera</taxon>
    </lineage>
</organism>
<evidence type="ECO:0000255" key="1">
    <source>
        <dbReference type="HAMAP-Rule" id="MF_00503"/>
    </source>
</evidence>
<evidence type="ECO:0000305" key="2"/>
<name>RL9_BUCCC</name>
<comment type="function">
    <text evidence="1">Binds to the 23S rRNA.</text>
</comment>
<comment type="similarity">
    <text evidence="1">Belongs to the bacterial ribosomal protein bL9 family.</text>
</comment>
<accession>Q056Y0</accession>
<keyword id="KW-1185">Reference proteome</keyword>
<keyword id="KW-0687">Ribonucleoprotein</keyword>
<keyword id="KW-0689">Ribosomal protein</keyword>
<keyword id="KW-0694">RNA-binding</keyword>
<keyword id="KW-0699">rRNA-binding</keyword>
<dbReference type="EMBL" id="CP000263">
    <property type="protein sequence ID" value="ABJ90819.1"/>
    <property type="molecule type" value="Genomic_DNA"/>
</dbReference>
<dbReference type="RefSeq" id="WP_011672738.1">
    <property type="nucleotide sequence ID" value="NC_008513.1"/>
</dbReference>
<dbReference type="SMR" id="Q056Y0"/>
<dbReference type="STRING" id="372461.BCc_368"/>
<dbReference type="KEGG" id="bcc:BCc_368"/>
<dbReference type="eggNOG" id="COG0359">
    <property type="taxonomic scope" value="Bacteria"/>
</dbReference>
<dbReference type="HOGENOM" id="CLU_078938_4_1_6"/>
<dbReference type="OrthoDB" id="9788336at2"/>
<dbReference type="Proteomes" id="UP000000669">
    <property type="component" value="Chromosome"/>
</dbReference>
<dbReference type="GO" id="GO:1990904">
    <property type="term" value="C:ribonucleoprotein complex"/>
    <property type="evidence" value="ECO:0007669"/>
    <property type="project" value="UniProtKB-KW"/>
</dbReference>
<dbReference type="GO" id="GO:0005840">
    <property type="term" value="C:ribosome"/>
    <property type="evidence" value="ECO:0007669"/>
    <property type="project" value="UniProtKB-KW"/>
</dbReference>
<dbReference type="GO" id="GO:0019843">
    <property type="term" value="F:rRNA binding"/>
    <property type="evidence" value="ECO:0007669"/>
    <property type="project" value="UniProtKB-UniRule"/>
</dbReference>
<dbReference type="GO" id="GO:0003735">
    <property type="term" value="F:structural constituent of ribosome"/>
    <property type="evidence" value="ECO:0007669"/>
    <property type="project" value="InterPro"/>
</dbReference>
<dbReference type="GO" id="GO:0006412">
    <property type="term" value="P:translation"/>
    <property type="evidence" value="ECO:0007669"/>
    <property type="project" value="UniProtKB-UniRule"/>
</dbReference>
<dbReference type="Gene3D" id="3.10.430.100">
    <property type="entry name" value="Ribosomal protein L9, C-terminal domain"/>
    <property type="match status" value="1"/>
</dbReference>
<dbReference type="Gene3D" id="3.40.5.10">
    <property type="entry name" value="Ribosomal protein L9, N-terminal domain"/>
    <property type="match status" value="1"/>
</dbReference>
<dbReference type="HAMAP" id="MF_00503">
    <property type="entry name" value="Ribosomal_bL9"/>
    <property type="match status" value="1"/>
</dbReference>
<dbReference type="InterPro" id="IPR000244">
    <property type="entry name" value="Ribosomal_bL9"/>
</dbReference>
<dbReference type="InterPro" id="IPR009027">
    <property type="entry name" value="Ribosomal_bL9/RNase_H1_N"/>
</dbReference>
<dbReference type="InterPro" id="IPR020594">
    <property type="entry name" value="Ribosomal_bL9_bac/chp"/>
</dbReference>
<dbReference type="InterPro" id="IPR020069">
    <property type="entry name" value="Ribosomal_bL9_C"/>
</dbReference>
<dbReference type="InterPro" id="IPR036791">
    <property type="entry name" value="Ribosomal_bL9_C_sf"/>
</dbReference>
<dbReference type="InterPro" id="IPR020070">
    <property type="entry name" value="Ribosomal_bL9_N"/>
</dbReference>
<dbReference type="InterPro" id="IPR036935">
    <property type="entry name" value="Ribosomal_bL9_N_sf"/>
</dbReference>
<dbReference type="NCBIfam" id="TIGR00158">
    <property type="entry name" value="L9"/>
    <property type="match status" value="1"/>
</dbReference>
<dbReference type="PANTHER" id="PTHR21368">
    <property type="entry name" value="50S RIBOSOMAL PROTEIN L9"/>
    <property type="match status" value="1"/>
</dbReference>
<dbReference type="Pfam" id="PF03948">
    <property type="entry name" value="Ribosomal_L9_C"/>
    <property type="match status" value="1"/>
</dbReference>
<dbReference type="Pfam" id="PF01281">
    <property type="entry name" value="Ribosomal_L9_N"/>
    <property type="match status" value="1"/>
</dbReference>
<dbReference type="SUPFAM" id="SSF55658">
    <property type="entry name" value="L9 N-domain-like"/>
    <property type="match status" value="1"/>
</dbReference>
<dbReference type="SUPFAM" id="SSF55653">
    <property type="entry name" value="Ribosomal protein L9 C-domain"/>
    <property type="match status" value="1"/>
</dbReference>
<dbReference type="PROSITE" id="PS00651">
    <property type="entry name" value="RIBOSOMAL_L9"/>
    <property type="match status" value="1"/>
</dbReference>
<sequence>MKVILLHALEKLGKKGQLITVKNGYARNYLIPLEKALLATSENIKIFEKKRLFEEQQEAKKIDYANSRIKAIKLIGAIIFFMKSSKKRKIFGSIGVKDISKQLISLGLLIKKNEIKLPNGLLHYLGSHTVLFTPYKNISTEFKVVILSK</sequence>